<protein>
    <recommendedName>
        <fullName evidence="1">Sulfite reductase [NADPH] hemoprotein beta-component</fullName>
        <shortName evidence="1">SiR-HP</shortName>
        <shortName evidence="1">SiRHP</shortName>
        <ecNumber evidence="1">1.8.1.2</ecNumber>
    </recommendedName>
</protein>
<evidence type="ECO:0000255" key="1">
    <source>
        <dbReference type="HAMAP-Rule" id="MF_01540"/>
    </source>
</evidence>
<evidence type="ECO:0000305" key="2"/>
<comment type="function">
    <text evidence="1">Component of the sulfite reductase complex that catalyzes the 6-electron reduction of sulfite to sulfide. This is one of several activities required for the biosynthesis of L-cysteine from sulfate.</text>
</comment>
<comment type="catalytic activity">
    <reaction evidence="1">
        <text>hydrogen sulfide + 3 NADP(+) + 3 H2O = sulfite + 3 NADPH + 4 H(+)</text>
        <dbReference type="Rhea" id="RHEA:13801"/>
        <dbReference type="ChEBI" id="CHEBI:15377"/>
        <dbReference type="ChEBI" id="CHEBI:15378"/>
        <dbReference type="ChEBI" id="CHEBI:17359"/>
        <dbReference type="ChEBI" id="CHEBI:29919"/>
        <dbReference type="ChEBI" id="CHEBI:57783"/>
        <dbReference type="ChEBI" id="CHEBI:58349"/>
        <dbReference type="EC" id="1.8.1.2"/>
    </reaction>
</comment>
<comment type="cofactor">
    <cofactor evidence="1">
        <name>siroheme</name>
        <dbReference type="ChEBI" id="CHEBI:60052"/>
    </cofactor>
    <text evidence="1">Binds 1 siroheme per subunit.</text>
</comment>
<comment type="cofactor">
    <cofactor evidence="1">
        <name>[4Fe-4S] cluster</name>
        <dbReference type="ChEBI" id="CHEBI:49883"/>
    </cofactor>
    <text evidence="1">Binds 1 [4Fe-4S] cluster per subunit.</text>
</comment>
<comment type="pathway">
    <text evidence="1">Sulfur metabolism; hydrogen sulfide biosynthesis; hydrogen sulfide from sulfite (NADPH route): step 1/1.</text>
</comment>
<comment type="subunit">
    <text evidence="1">Alpha(8)-beta(8). The alpha component is a flavoprotein, the beta component is a hemoprotein.</text>
</comment>
<comment type="similarity">
    <text evidence="1">Belongs to the nitrite and sulfite reductase 4Fe-4S domain family.</text>
</comment>
<comment type="sequence caution" evidence="2">
    <conflict type="erroneous initiation">
        <sequence resource="EMBL-CDS" id="AAO28584"/>
    </conflict>
</comment>
<accession>Q87DH0</accession>
<organism>
    <name type="scientific">Xylella fastidiosa (strain Temecula1 / ATCC 700964)</name>
    <dbReference type="NCBI Taxonomy" id="183190"/>
    <lineage>
        <taxon>Bacteria</taxon>
        <taxon>Pseudomonadati</taxon>
        <taxon>Pseudomonadota</taxon>
        <taxon>Gammaproteobacteria</taxon>
        <taxon>Lysobacterales</taxon>
        <taxon>Lysobacteraceae</taxon>
        <taxon>Xylella</taxon>
    </lineage>
</organism>
<name>CYSI_XYLFT</name>
<reference key="1">
    <citation type="journal article" date="2003" name="J. Bacteriol.">
        <title>Comparative analyses of the complete genome sequences of Pierce's disease and citrus variegated chlorosis strains of Xylella fastidiosa.</title>
        <authorList>
            <person name="Van Sluys M.A."/>
            <person name="de Oliveira M.C."/>
            <person name="Monteiro-Vitorello C.B."/>
            <person name="Miyaki C.Y."/>
            <person name="Furlan L.R."/>
            <person name="Camargo L.E.A."/>
            <person name="da Silva A.C.R."/>
            <person name="Moon D.H."/>
            <person name="Takita M.A."/>
            <person name="Lemos E.G.M."/>
            <person name="Machado M.A."/>
            <person name="Ferro M.I.T."/>
            <person name="da Silva F.R."/>
            <person name="Goldman M.H.S."/>
            <person name="Goldman G.H."/>
            <person name="Lemos M.V.F."/>
            <person name="El-Dorry H."/>
            <person name="Tsai S.M."/>
            <person name="Carrer H."/>
            <person name="Carraro D.M."/>
            <person name="de Oliveira R.C."/>
            <person name="Nunes L.R."/>
            <person name="Siqueira W.J."/>
            <person name="Coutinho L.L."/>
            <person name="Kimura E.T."/>
            <person name="Ferro E.S."/>
            <person name="Harakava R."/>
            <person name="Kuramae E.E."/>
            <person name="Marino C.L."/>
            <person name="Giglioti E."/>
            <person name="Abreu I.L."/>
            <person name="Alves L.M.C."/>
            <person name="do Amaral A.M."/>
            <person name="Baia G.S."/>
            <person name="Blanco S.R."/>
            <person name="Brito M.S."/>
            <person name="Cannavan F.S."/>
            <person name="Celestino A.V."/>
            <person name="da Cunha A.F."/>
            <person name="Fenille R.C."/>
            <person name="Ferro J.A."/>
            <person name="Formighieri E.F."/>
            <person name="Kishi L.T."/>
            <person name="Leoni S.G."/>
            <person name="Oliveira A.R."/>
            <person name="Rosa V.E. Jr."/>
            <person name="Sassaki F.T."/>
            <person name="Sena J.A.D."/>
            <person name="de Souza A.A."/>
            <person name="Truffi D."/>
            <person name="Tsukumo F."/>
            <person name="Yanai G.M."/>
            <person name="Zaros L.G."/>
            <person name="Civerolo E.L."/>
            <person name="Simpson A.J.G."/>
            <person name="Almeida N.F. Jr."/>
            <person name="Setubal J.C."/>
            <person name="Kitajima J.P."/>
        </authorList>
    </citation>
    <scope>NUCLEOTIDE SEQUENCE [LARGE SCALE GENOMIC DNA]</scope>
    <source>
        <strain>Temecula1 / ATCC 700964</strain>
    </source>
</reference>
<gene>
    <name evidence="1" type="primary">cysI</name>
    <name type="ordered locus">PD_0715</name>
</gene>
<sequence>MSSSSIEDIKGKSHRLRGSLLESLANPTTGALGESDQTLIKYHGSYQQDDRDLREERRRQKLEPAYQFMIRTRTPGGVITPQQWLQLDAIATRYANHSLRVTTRQAFQFHGVIKRELKTTMQAINAALIDTLAACGDVNRNVQVAANPLLSRAHADLYTDAAHLSEHLLPNTRAYYEIWLDEKKVAGAGEEEEPIYGPHYLPRKFKIGFAAPPINDVDVFANDLGFIAVIVDNTLLGYNVTIGGGMGTTHGDPDTWPRVGNIIGFITRADLITISTAIVTTQRDFGNRTLRKRARFKYTIDDRGLDCIVGEIQQRAGITLQPARPFVFEHNGDRYGWIEGEDGHWHLTLSLPAGRIADTEGSTLLSGFREIAQLGIGEFRMTPNQNVVIAGISPGQRAAIDALVTQYGLDTGNRAPTALGRHAMACVALPTCGLAMAEAERYLPDFNAKLQPILEKYGLAEAPILLRISGCPNGCSRPYLAEIALVGKAPGRYNLMLGGDQRGQRLNTLYRENITETEILAALEPLLGRYQQKRLPSEGFGDFLHRTGIIALPPYPTHRHVISSTLQA</sequence>
<feature type="chain" id="PRO_0000388538" description="Sulfite reductase [NADPH] hemoprotein beta-component">
    <location>
        <begin position="1"/>
        <end position="568"/>
    </location>
</feature>
<feature type="binding site" evidence="1">
    <location>
        <position position="426"/>
    </location>
    <ligand>
        <name>[4Fe-4S] cluster</name>
        <dbReference type="ChEBI" id="CHEBI:49883"/>
    </ligand>
</feature>
<feature type="binding site" evidence="1">
    <location>
        <position position="432"/>
    </location>
    <ligand>
        <name>[4Fe-4S] cluster</name>
        <dbReference type="ChEBI" id="CHEBI:49883"/>
    </ligand>
</feature>
<feature type="binding site" evidence="1">
    <location>
        <position position="471"/>
    </location>
    <ligand>
        <name>[4Fe-4S] cluster</name>
        <dbReference type="ChEBI" id="CHEBI:49883"/>
    </ligand>
</feature>
<feature type="binding site" evidence="1">
    <location>
        <position position="475"/>
    </location>
    <ligand>
        <name>[4Fe-4S] cluster</name>
        <dbReference type="ChEBI" id="CHEBI:49883"/>
    </ligand>
</feature>
<feature type="binding site" description="axial binding residue" evidence="1">
    <location>
        <position position="475"/>
    </location>
    <ligand>
        <name>siroheme</name>
        <dbReference type="ChEBI" id="CHEBI:60052"/>
    </ligand>
    <ligandPart>
        <name>Fe</name>
        <dbReference type="ChEBI" id="CHEBI:18248"/>
    </ligandPart>
</feature>
<proteinExistence type="inferred from homology"/>
<keyword id="KW-0004">4Fe-4S</keyword>
<keyword id="KW-0028">Amino-acid biosynthesis</keyword>
<keyword id="KW-0198">Cysteine biosynthesis</keyword>
<keyword id="KW-0349">Heme</keyword>
<keyword id="KW-0408">Iron</keyword>
<keyword id="KW-0411">Iron-sulfur</keyword>
<keyword id="KW-0479">Metal-binding</keyword>
<keyword id="KW-0521">NADP</keyword>
<keyword id="KW-0560">Oxidoreductase</keyword>
<keyword id="KW-1185">Reference proteome</keyword>
<dbReference type="EC" id="1.8.1.2" evidence="1"/>
<dbReference type="EMBL" id="AE009442">
    <property type="protein sequence ID" value="AAO28584.1"/>
    <property type="status" value="ALT_INIT"/>
    <property type="molecule type" value="Genomic_DNA"/>
</dbReference>
<dbReference type="RefSeq" id="WP_004089014.1">
    <property type="nucleotide sequence ID" value="NC_004556.1"/>
</dbReference>
<dbReference type="SMR" id="Q87DH0"/>
<dbReference type="GeneID" id="93904495"/>
<dbReference type="KEGG" id="xft:PD_0715"/>
<dbReference type="HOGENOM" id="CLU_001975_3_2_6"/>
<dbReference type="UniPathway" id="UPA00140">
    <property type="reaction ID" value="UER00207"/>
</dbReference>
<dbReference type="Proteomes" id="UP000002516">
    <property type="component" value="Chromosome"/>
</dbReference>
<dbReference type="GO" id="GO:0009337">
    <property type="term" value="C:sulfite reductase complex (NADPH)"/>
    <property type="evidence" value="ECO:0007669"/>
    <property type="project" value="InterPro"/>
</dbReference>
<dbReference type="GO" id="GO:0051539">
    <property type="term" value="F:4 iron, 4 sulfur cluster binding"/>
    <property type="evidence" value="ECO:0007669"/>
    <property type="project" value="UniProtKB-KW"/>
</dbReference>
<dbReference type="GO" id="GO:0020037">
    <property type="term" value="F:heme binding"/>
    <property type="evidence" value="ECO:0007669"/>
    <property type="project" value="InterPro"/>
</dbReference>
<dbReference type="GO" id="GO:0046872">
    <property type="term" value="F:metal ion binding"/>
    <property type="evidence" value="ECO:0007669"/>
    <property type="project" value="UniProtKB-KW"/>
</dbReference>
<dbReference type="GO" id="GO:0050661">
    <property type="term" value="F:NADP binding"/>
    <property type="evidence" value="ECO:0007669"/>
    <property type="project" value="InterPro"/>
</dbReference>
<dbReference type="GO" id="GO:0050311">
    <property type="term" value="F:sulfite reductase (ferredoxin) activity"/>
    <property type="evidence" value="ECO:0007669"/>
    <property type="project" value="TreeGrafter"/>
</dbReference>
<dbReference type="GO" id="GO:0004783">
    <property type="term" value="F:sulfite reductase (NADPH) activity"/>
    <property type="evidence" value="ECO:0007669"/>
    <property type="project" value="UniProtKB-UniRule"/>
</dbReference>
<dbReference type="GO" id="GO:0019344">
    <property type="term" value="P:cysteine biosynthetic process"/>
    <property type="evidence" value="ECO:0007669"/>
    <property type="project" value="UniProtKB-KW"/>
</dbReference>
<dbReference type="GO" id="GO:0070814">
    <property type="term" value="P:hydrogen sulfide biosynthetic process"/>
    <property type="evidence" value="ECO:0007669"/>
    <property type="project" value="UniProtKB-UniRule"/>
</dbReference>
<dbReference type="GO" id="GO:0000103">
    <property type="term" value="P:sulfate assimilation"/>
    <property type="evidence" value="ECO:0007669"/>
    <property type="project" value="UniProtKB-UniRule"/>
</dbReference>
<dbReference type="FunFam" id="3.30.413.10:FF:000003">
    <property type="entry name" value="Sulfite reductase [NADPH] hemoprotein beta-component"/>
    <property type="match status" value="1"/>
</dbReference>
<dbReference type="Gene3D" id="3.30.413.10">
    <property type="entry name" value="Sulfite Reductase Hemoprotein, domain 1"/>
    <property type="match status" value="2"/>
</dbReference>
<dbReference type="HAMAP" id="MF_01540">
    <property type="entry name" value="CysI"/>
    <property type="match status" value="1"/>
</dbReference>
<dbReference type="InterPro" id="IPR011786">
    <property type="entry name" value="CysI"/>
</dbReference>
<dbReference type="InterPro" id="IPR005117">
    <property type="entry name" value="NiRdtase/SiRdtase_haem-b_fer"/>
</dbReference>
<dbReference type="InterPro" id="IPR036136">
    <property type="entry name" value="Nit/Sulf_reduc_fer-like_dom_sf"/>
</dbReference>
<dbReference type="InterPro" id="IPR006067">
    <property type="entry name" value="NO2/SO3_Rdtase_4Fe4S_dom"/>
</dbReference>
<dbReference type="InterPro" id="IPR045169">
    <property type="entry name" value="NO2/SO3_Rdtase_4Fe4S_prot"/>
</dbReference>
<dbReference type="InterPro" id="IPR045854">
    <property type="entry name" value="NO2/SO3_Rdtase_4Fe4S_sf"/>
</dbReference>
<dbReference type="InterPro" id="IPR006066">
    <property type="entry name" value="NO2/SO3_Rdtase_FeS/sirohaem_BS"/>
</dbReference>
<dbReference type="NCBIfam" id="TIGR02041">
    <property type="entry name" value="CysI"/>
    <property type="match status" value="1"/>
</dbReference>
<dbReference type="NCBIfam" id="NF010029">
    <property type="entry name" value="PRK13504.1"/>
    <property type="match status" value="1"/>
</dbReference>
<dbReference type="PANTHER" id="PTHR11493:SF47">
    <property type="entry name" value="SULFITE REDUCTASE [NADPH] SUBUNIT BETA"/>
    <property type="match status" value="1"/>
</dbReference>
<dbReference type="PANTHER" id="PTHR11493">
    <property type="entry name" value="SULFITE REDUCTASE [NADPH] SUBUNIT BETA-RELATED"/>
    <property type="match status" value="1"/>
</dbReference>
<dbReference type="Pfam" id="PF01077">
    <property type="entry name" value="NIR_SIR"/>
    <property type="match status" value="1"/>
</dbReference>
<dbReference type="Pfam" id="PF03460">
    <property type="entry name" value="NIR_SIR_ferr"/>
    <property type="match status" value="2"/>
</dbReference>
<dbReference type="PRINTS" id="PR00397">
    <property type="entry name" value="SIROHAEM"/>
</dbReference>
<dbReference type="SUPFAM" id="SSF56014">
    <property type="entry name" value="Nitrite and sulphite reductase 4Fe-4S domain-like"/>
    <property type="match status" value="2"/>
</dbReference>
<dbReference type="SUPFAM" id="SSF55124">
    <property type="entry name" value="Nitrite/Sulfite reductase N-terminal domain-like"/>
    <property type="match status" value="2"/>
</dbReference>
<dbReference type="PROSITE" id="PS00365">
    <property type="entry name" value="NIR_SIR"/>
    <property type="match status" value="1"/>
</dbReference>